<keyword id="KW-1003">Cell membrane</keyword>
<keyword id="KW-0472">Membrane</keyword>
<keyword id="KW-0521">NADP</keyword>
<keyword id="KW-0560">Oxidoreductase</keyword>
<keyword id="KW-1185">Reference proteome</keyword>
<keyword id="KW-0812">Transmembrane</keyword>
<keyword id="KW-1133">Transmembrane helix</keyword>
<gene>
    <name type="ORF">OsI_26070</name>
</gene>
<sequence>MESEGWPALQPLLCFAWIAATLPIIAAALPIPTAVGGHLLRRLLSAFSSRGKTVRPSPASSSGSSSSKAKFTVPQKYFMHFYVVGVLATTILLLAIWFYAYMKLTPLLLESSSYSTIFSHLVGSNSFSFGRVRSRTMGHKYRVWRTVFALLLMEVQVLRRLYETEHVFHYSPARMHIVGYLTGLFYYVAAPLSLASSCIPEAAEYFQGQVPEFVVKGRARMPDLVIDSSSLLQPLLKLGWTQWIGAVIFIWGSLHQIRCHAILGSLREHKDSDEYVIPCSDCFNRVSCPHYLAELVIYFGMLVASGAEDIPVWFLFIFLITNLSFAAVETYNWYLQKFEDYPRSRYAIIPFVC</sequence>
<reference key="1">
    <citation type="journal article" date="2005" name="PLoS Biol.">
        <title>The genomes of Oryza sativa: a history of duplications.</title>
        <authorList>
            <person name="Yu J."/>
            <person name="Wang J."/>
            <person name="Lin W."/>
            <person name="Li S."/>
            <person name="Li H."/>
            <person name="Zhou J."/>
            <person name="Ni P."/>
            <person name="Dong W."/>
            <person name="Hu S."/>
            <person name="Zeng C."/>
            <person name="Zhang J."/>
            <person name="Zhang Y."/>
            <person name="Li R."/>
            <person name="Xu Z."/>
            <person name="Li S."/>
            <person name="Li X."/>
            <person name="Zheng H."/>
            <person name="Cong L."/>
            <person name="Lin L."/>
            <person name="Yin J."/>
            <person name="Geng J."/>
            <person name="Li G."/>
            <person name="Shi J."/>
            <person name="Liu J."/>
            <person name="Lv H."/>
            <person name="Li J."/>
            <person name="Wang J."/>
            <person name="Deng Y."/>
            <person name="Ran L."/>
            <person name="Shi X."/>
            <person name="Wang X."/>
            <person name="Wu Q."/>
            <person name="Li C."/>
            <person name="Ren X."/>
            <person name="Wang J."/>
            <person name="Wang X."/>
            <person name="Li D."/>
            <person name="Liu D."/>
            <person name="Zhang X."/>
            <person name="Ji Z."/>
            <person name="Zhao W."/>
            <person name="Sun Y."/>
            <person name="Zhang Z."/>
            <person name="Bao J."/>
            <person name="Han Y."/>
            <person name="Dong L."/>
            <person name="Ji J."/>
            <person name="Chen P."/>
            <person name="Wu S."/>
            <person name="Liu J."/>
            <person name="Xiao Y."/>
            <person name="Bu D."/>
            <person name="Tan J."/>
            <person name="Yang L."/>
            <person name="Ye C."/>
            <person name="Zhang J."/>
            <person name="Xu J."/>
            <person name="Zhou Y."/>
            <person name="Yu Y."/>
            <person name="Zhang B."/>
            <person name="Zhuang S."/>
            <person name="Wei H."/>
            <person name="Liu B."/>
            <person name="Lei M."/>
            <person name="Yu H."/>
            <person name="Li Y."/>
            <person name="Xu H."/>
            <person name="Wei S."/>
            <person name="He X."/>
            <person name="Fang L."/>
            <person name="Zhang Z."/>
            <person name="Zhang Y."/>
            <person name="Huang X."/>
            <person name="Su Z."/>
            <person name="Tong W."/>
            <person name="Li J."/>
            <person name="Tong Z."/>
            <person name="Li S."/>
            <person name="Ye J."/>
            <person name="Wang L."/>
            <person name="Fang L."/>
            <person name="Lei T."/>
            <person name="Chen C.-S."/>
            <person name="Chen H.-C."/>
            <person name="Xu Z."/>
            <person name="Li H."/>
            <person name="Huang H."/>
            <person name="Zhang F."/>
            <person name="Xu H."/>
            <person name="Li N."/>
            <person name="Zhao C."/>
            <person name="Li S."/>
            <person name="Dong L."/>
            <person name="Huang Y."/>
            <person name="Li L."/>
            <person name="Xi Y."/>
            <person name="Qi Q."/>
            <person name="Li W."/>
            <person name="Zhang B."/>
            <person name="Hu W."/>
            <person name="Zhang Y."/>
            <person name="Tian X."/>
            <person name="Jiao Y."/>
            <person name="Liang X."/>
            <person name="Jin J."/>
            <person name="Gao L."/>
            <person name="Zheng W."/>
            <person name="Hao B."/>
            <person name="Liu S.-M."/>
            <person name="Wang W."/>
            <person name="Yuan L."/>
            <person name="Cao M."/>
            <person name="McDermott J."/>
            <person name="Samudrala R."/>
            <person name="Wang J."/>
            <person name="Wong G.K.-S."/>
            <person name="Yang H."/>
        </authorList>
    </citation>
    <scope>NUCLEOTIDE SEQUENCE [LARGE SCALE GENOMIC DNA]</scope>
    <source>
        <strain>cv. 93-11</strain>
    </source>
</reference>
<comment type="function">
    <text evidence="1 2">Plays a key role in early steps of protein N-linked glycosylation by being involved in the conversion of polyprenol into dolichol (By similarity). Acts as a polyprenal reductase that mediates the reduction of polyprenal into dolichal in a NADP-dependent mechanism (By similarity). Dolichols are required for the synthesis of dolichol-linked monosaccharides and the oligosaccharide precursor used for N-glycosylation (By similarity).</text>
</comment>
<comment type="catalytic activity">
    <reaction evidence="2">
        <text>a di-trans,poly-cis-dolichal + NADP(+) = a di-trans,poly-cis-polyprenal + NADPH + H(+)</text>
        <dbReference type="Rhea" id="RHEA:80727"/>
        <dbReference type="Rhea" id="RHEA-COMP:19536"/>
        <dbReference type="Rhea" id="RHEA-COMP:19537"/>
        <dbReference type="ChEBI" id="CHEBI:15378"/>
        <dbReference type="ChEBI" id="CHEBI:57783"/>
        <dbReference type="ChEBI" id="CHEBI:58349"/>
        <dbReference type="ChEBI" id="CHEBI:231623"/>
        <dbReference type="ChEBI" id="CHEBI:231637"/>
        <dbReference type="EC" id="1.3.1.94"/>
    </reaction>
    <physiologicalReaction direction="right-to-left" evidence="2">
        <dbReference type="Rhea" id="RHEA:80729"/>
    </physiologicalReaction>
</comment>
<comment type="pathway">
    <text evidence="1">Protein modification; protein glycosylation.</text>
</comment>
<comment type="subcellular location">
    <subcellularLocation>
        <location evidence="1">Cell membrane</location>
        <topology evidence="3">Multi-pass membrane protein</topology>
    </subcellularLocation>
</comment>
<comment type="similarity">
    <text evidence="4">Belongs to the steroid 5-alpha reductase family. Polyprenal reductase subfamily.</text>
</comment>
<comment type="sequence caution" evidence="4">
    <conflict type="erroneous gene model prediction">
        <sequence resource="EMBL-CDS" id="EEC82076"/>
    </conflict>
</comment>
<comment type="sequence caution" evidence="4">
    <conflict type="frameshift">
        <sequence resource="EMBL-CDS" id="EEC82076"/>
    </conflict>
</comment>
<accession>B8B6G5</accession>
<name>PPRD2_ORYSI</name>
<dbReference type="EC" id="1.3.1.94" evidence="2"/>
<dbReference type="EMBL" id="CM000132">
    <property type="protein sequence ID" value="EEC82076.1"/>
    <property type="status" value="ALT_SEQ"/>
    <property type="molecule type" value="Genomic_DNA"/>
</dbReference>
<dbReference type="SMR" id="B8B6G5"/>
<dbReference type="STRING" id="39946.B8B6G5"/>
<dbReference type="HOGENOM" id="CLU_044409_1_0_1"/>
<dbReference type="UniPathway" id="UPA00378"/>
<dbReference type="Proteomes" id="UP000007015">
    <property type="component" value="Chromosome 7"/>
</dbReference>
<dbReference type="GO" id="GO:0005783">
    <property type="term" value="C:endoplasmic reticulum"/>
    <property type="evidence" value="ECO:0007669"/>
    <property type="project" value="TreeGrafter"/>
</dbReference>
<dbReference type="GO" id="GO:0005886">
    <property type="term" value="C:plasma membrane"/>
    <property type="evidence" value="ECO:0007669"/>
    <property type="project" value="UniProtKB-SubCell"/>
</dbReference>
<dbReference type="GO" id="GO:0003865">
    <property type="term" value="F:3-oxo-5-alpha-steroid 4-dehydrogenase activity"/>
    <property type="evidence" value="ECO:0007669"/>
    <property type="project" value="TreeGrafter"/>
</dbReference>
<dbReference type="GO" id="GO:0160198">
    <property type="term" value="F:polyprenal reductase activity"/>
    <property type="evidence" value="ECO:0000250"/>
    <property type="project" value="UniProtKB"/>
</dbReference>
<dbReference type="GO" id="GO:0019408">
    <property type="term" value="P:dolichol biosynthetic process"/>
    <property type="evidence" value="ECO:0000250"/>
    <property type="project" value="UniProtKB"/>
</dbReference>
<dbReference type="GO" id="GO:0006488">
    <property type="term" value="P:dolichol-linked oligosaccharide biosynthetic process"/>
    <property type="evidence" value="ECO:0007669"/>
    <property type="project" value="InterPro"/>
</dbReference>
<dbReference type="GO" id="GO:0016095">
    <property type="term" value="P:polyprenol catabolic process"/>
    <property type="evidence" value="ECO:0007669"/>
    <property type="project" value="TreeGrafter"/>
</dbReference>
<dbReference type="FunFam" id="1.20.120.1630:FF:000012">
    <property type="entry name" value="Polyprenol reductase 1"/>
    <property type="match status" value="1"/>
</dbReference>
<dbReference type="Gene3D" id="1.20.120.1630">
    <property type="match status" value="1"/>
</dbReference>
<dbReference type="InterPro" id="IPR001104">
    <property type="entry name" value="3-oxo-5_a-steroid_4-DH_C"/>
</dbReference>
<dbReference type="InterPro" id="IPR039698">
    <property type="entry name" value="Dfg10/SRD5A3"/>
</dbReference>
<dbReference type="PANTHER" id="PTHR14624">
    <property type="entry name" value="DFG10 PROTEIN"/>
    <property type="match status" value="1"/>
</dbReference>
<dbReference type="PANTHER" id="PTHR14624:SF0">
    <property type="entry name" value="POLYPRENOL REDUCTASE"/>
    <property type="match status" value="1"/>
</dbReference>
<dbReference type="Pfam" id="PF02544">
    <property type="entry name" value="Steroid_dh"/>
    <property type="match status" value="1"/>
</dbReference>
<dbReference type="PROSITE" id="PS50244">
    <property type="entry name" value="S5A_REDUCTASE"/>
    <property type="match status" value="1"/>
</dbReference>
<organism>
    <name type="scientific">Oryza sativa subsp. indica</name>
    <name type="common">Rice</name>
    <dbReference type="NCBI Taxonomy" id="39946"/>
    <lineage>
        <taxon>Eukaryota</taxon>
        <taxon>Viridiplantae</taxon>
        <taxon>Streptophyta</taxon>
        <taxon>Embryophyta</taxon>
        <taxon>Tracheophyta</taxon>
        <taxon>Spermatophyta</taxon>
        <taxon>Magnoliopsida</taxon>
        <taxon>Liliopsida</taxon>
        <taxon>Poales</taxon>
        <taxon>Poaceae</taxon>
        <taxon>BOP clade</taxon>
        <taxon>Oryzoideae</taxon>
        <taxon>Oryzeae</taxon>
        <taxon>Oryzinae</taxon>
        <taxon>Oryza</taxon>
        <taxon>Oryza sativa</taxon>
    </lineage>
</organism>
<proteinExistence type="inferred from homology"/>
<evidence type="ECO:0000250" key="1">
    <source>
        <dbReference type="UniProtKB" id="Q9CAH5"/>
    </source>
</evidence>
<evidence type="ECO:0000250" key="2">
    <source>
        <dbReference type="UniProtKB" id="Q9H8P0"/>
    </source>
</evidence>
<evidence type="ECO:0000255" key="3"/>
<evidence type="ECO:0000305" key="4"/>
<protein>
    <recommendedName>
        <fullName evidence="4">Polyprenal reductase 2</fullName>
        <ecNumber evidence="2">1.3.1.94</ecNumber>
    </recommendedName>
</protein>
<feature type="chain" id="PRO_0000398660" description="Polyprenal reductase 2">
    <location>
        <begin position="1"/>
        <end position="353"/>
    </location>
</feature>
<feature type="transmembrane region" description="Helical" evidence="3">
    <location>
        <begin position="11"/>
        <end position="31"/>
    </location>
</feature>
<feature type="transmembrane region" description="Helical" evidence="3">
    <location>
        <begin position="78"/>
        <end position="98"/>
    </location>
</feature>
<feature type="transmembrane region" description="Helical" evidence="3">
    <location>
        <begin position="175"/>
        <end position="195"/>
    </location>
</feature>
<feature type="transmembrane region" description="Helical" evidence="3">
    <location>
        <begin position="234"/>
        <end position="254"/>
    </location>
</feature>
<feature type="transmembrane region" description="Helical" evidence="3">
    <location>
        <begin position="291"/>
        <end position="308"/>
    </location>
</feature>
<feature type="transmembrane region" description="Helical" evidence="3">
    <location>
        <begin position="313"/>
        <end position="335"/>
    </location>
</feature>